<proteinExistence type="inferred from homology"/>
<comment type="function">
    <text evidence="1">Phosphorylation of dTMP to form dTDP in both de novo and salvage pathways of dTTP synthesis.</text>
</comment>
<comment type="catalytic activity">
    <reaction evidence="1">
        <text>dTMP + ATP = dTDP + ADP</text>
        <dbReference type="Rhea" id="RHEA:13517"/>
        <dbReference type="ChEBI" id="CHEBI:30616"/>
        <dbReference type="ChEBI" id="CHEBI:58369"/>
        <dbReference type="ChEBI" id="CHEBI:63528"/>
        <dbReference type="ChEBI" id="CHEBI:456216"/>
        <dbReference type="EC" id="2.7.4.9"/>
    </reaction>
</comment>
<comment type="similarity">
    <text evidence="1">Belongs to the thymidylate kinase family.</text>
</comment>
<evidence type="ECO:0000255" key="1">
    <source>
        <dbReference type="HAMAP-Rule" id="MF_00165"/>
    </source>
</evidence>
<name>KTHY_HELAH</name>
<dbReference type="EC" id="2.7.4.9" evidence="1"/>
<dbReference type="EMBL" id="AM260522">
    <property type="protein sequence ID" value="CAK00430.1"/>
    <property type="molecule type" value="Genomic_DNA"/>
</dbReference>
<dbReference type="RefSeq" id="WP_011578512.1">
    <property type="nucleotide sequence ID" value="NC_008229.1"/>
</dbReference>
<dbReference type="SMR" id="Q17V96"/>
<dbReference type="STRING" id="382638.Hac_1734"/>
<dbReference type="GeneID" id="31758969"/>
<dbReference type="KEGG" id="hac:Hac_1734"/>
<dbReference type="eggNOG" id="COG0125">
    <property type="taxonomic scope" value="Bacteria"/>
</dbReference>
<dbReference type="HOGENOM" id="CLU_049131_0_0_7"/>
<dbReference type="OrthoDB" id="9774907at2"/>
<dbReference type="BioCyc" id="HACI382638:HAC_RS07360-MONOMER"/>
<dbReference type="Proteomes" id="UP000000775">
    <property type="component" value="Chromosome"/>
</dbReference>
<dbReference type="GO" id="GO:0005829">
    <property type="term" value="C:cytosol"/>
    <property type="evidence" value="ECO:0007669"/>
    <property type="project" value="TreeGrafter"/>
</dbReference>
<dbReference type="GO" id="GO:0005524">
    <property type="term" value="F:ATP binding"/>
    <property type="evidence" value="ECO:0007669"/>
    <property type="project" value="UniProtKB-UniRule"/>
</dbReference>
<dbReference type="GO" id="GO:0004798">
    <property type="term" value="F:dTMP kinase activity"/>
    <property type="evidence" value="ECO:0007669"/>
    <property type="project" value="UniProtKB-UniRule"/>
</dbReference>
<dbReference type="GO" id="GO:0006233">
    <property type="term" value="P:dTDP biosynthetic process"/>
    <property type="evidence" value="ECO:0007669"/>
    <property type="project" value="InterPro"/>
</dbReference>
<dbReference type="GO" id="GO:0006235">
    <property type="term" value="P:dTTP biosynthetic process"/>
    <property type="evidence" value="ECO:0007669"/>
    <property type="project" value="UniProtKB-UniRule"/>
</dbReference>
<dbReference type="GO" id="GO:0006227">
    <property type="term" value="P:dUDP biosynthetic process"/>
    <property type="evidence" value="ECO:0007669"/>
    <property type="project" value="TreeGrafter"/>
</dbReference>
<dbReference type="CDD" id="cd01672">
    <property type="entry name" value="TMPK"/>
    <property type="match status" value="1"/>
</dbReference>
<dbReference type="Gene3D" id="3.40.50.300">
    <property type="entry name" value="P-loop containing nucleotide triphosphate hydrolases"/>
    <property type="match status" value="1"/>
</dbReference>
<dbReference type="HAMAP" id="MF_00165">
    <property type="entry name" value="Thymidylate_kinase"/>
    <property type="match status" value="1"/>
</dbReference>
<dbReference type="InterPro" id="IPR027417">
    <property type="entry name" value="P-loop_NTPase"/>
</dbReference>
<dbReference type="InterPro" id="IPR039430">
    <property type="entry name" value="Thymidylate_kin-like_dom"/>
</dbReference>
<dbReference type="InterPro" id="IPR018095">
    <property type="entry name" value="Thymidylate_kin_CS"/>
</dbReference>
<dbReference type="InterPro" id="IPR018094">
    <property type="entry name" value="Thymidylate_kinase"/>
</dbReference>
<dbReference type="NCBIfam" id="TIGR00041">
    <property type="entry name" value="DTMP_kinase"/>
    <property type="match status" value="1"/>
</dbReference>
<dbReference type="PANTHER" id="PTHR10344">
    <property type="entry name" value="THYMIDYLATE KINASE"/>
    <property type="match status" value="1"/>
</dbReference>
<dbReference type="PANTHER" id="PTHR10344:SF4">
    <property type="entry name" value="UMP-CMP KINASE 2, MITOCHONDRIAL"/>
    <property type="match status" value="1"/>
</dbReference>
<dbReference type="Pfam" id="PF02223">
    <property type="entry name" value="Thymidylate_kin"/>
    <property type="match status" value="1"/>
</dbReference>
<dbReference type="SUPFAM" id="SSF52540">
    <property type="entry name" value="P-loop containing nucleoside triphosphate hydrolases"/>
    <property type="match status" value="1"/>
</dbReference>
<dbReference type="PROSITE" id="PS01331">
    <property type="entry name" value="THYMIDYLATE_KINASE"/>
    <property type="match status" value="1"/>
</dbReference>
<gene>
    <name evidence="1" type="primary">tmk</name>
    <name type="ordered locus">Hac_1734</name>
</gene>
<feature type="chain" id="PRO_1000023200" description="Thymidylate kinase">
    <location>
        <begin position="1"/>
        <end position="191"/>
    </location>
</feature>
<feature type="binding site" evidence="1">
    <location>
        <begin position="7"/>
        <end position="14"/>
    </location>
    <ligand>
        <name>ATP</name>
        <dbReference type="ChEBI" id="CHEBI:30616"/>
    </ligand>
</feature>
<protein>
    <recommendedName>
        <fullName evidence="1">Thymidylate kinase</fullName>
        <ecNumber evidence="1">2.7.4.9</ecNumber>
    </recommendedName>
    <alternativeName>
        <fullName evidence="1">dTMP kinase</fullName>
    </alternativeName>
</protein>
<keyword id="KW-0067">ATP-binding</keyword>
<keyword id="KW-0418">Kinase</keyword>
<keyword id="KW-0545">Nucleotide biosynthesis</keyword>
<keyword id="KW-0547">Nucleotide-binding</keyword>
<keyword id="KW-0808">Transferase</keyword>
<accession>Q17V96</accession>
<sequence>MYVVLEGIDGVGKSTQIELLKSAFQNALFTKEPGGTKIGETLRHIALHENLSELARAFLFLSDRAEHIESVIKPALKEKKLIISDRSLISGMAYSAFSSLELNLLATQSILPAKIILLWIDKEGLKERLSLKSLDKIENQGVEKLLHIQQKFKTHAYALKEQFGCEVLELNAKENAKNLHERISAFIQCVV</sequence>
<organism>
    <name type="scientific">Helicobacter acinonychis (strain Sheeba)</name>
    <dbReference type="NCBI Taxonomy" id="382638"/>
    <lineage>
        <taxon>Bacteria</taxon>
        <taxon>Pseudomonadati</taxon>
        <taxon>Campylobacterota</taxon>
        <taxon>Epsilonproteobacteria</taxon>
        <taxon>Campylobacterales</taxon>
        <taxon>Helicobacteraceae</taxon>
        <taxon>Helicobacter</taxon>
    </lineage>
</organism>
<reference key="1">
    <citation type="journal article" date="2006" name="PLoS Genet.">
        <title>Who ate whom? Adaptive Helicobacter genomic changes that accompanied a host jump from early humans to large felines.</title>
        <authorList>
            <person name="Eppinger M."/>
            <person name="Baar C."/>
            <person name="Linz B."/>
            <person name="Raddatz G."/>
            <person name="Lanz C."/>
            <person name="Keller H."/>
            <person name="Morelli G."/>
            <person name="Gressmann H."/>
            <person name="Achtman M."/>
            <person name="Schuster S.C."/>
        </authorList>
    </citation>
    <scope>NUCLEOTIDE SEQUENCE [LARGE SCALE GENOMIC DNA]</scope>
    <source>
        <strain>Sheeba</strain>
    </source>
</reference>